<protein>
    <recommendedName>
        <fullName evidence="7">Conglutin delta 2</fullName>
    </recommendedName>
    <allergenName evidence="8">Lup an delta-conglutin</allergenName>
    <component>
        <recommendedName>
            <fullName evidence="1">Conglutin delta-2 large chain</fullName>
        </recommendedName>
    </component>
    <component>
        <recommendedName>
            <fullName evidence="1">Conglutin delta-2 small chain</fullName>
        </recommendedName>
    </component>
</protein>
<accession>Q99235</accession>
<evidence type="ECO:0000250" key="1">
    <source>
        <dbReference type="UniProtKB" id="F5B8W8"/>
    </source>
</evidence>
<evidence type="ECO:0000250" key="2">
    <source>
        <dbReference type="UniProtKB" id="P09930"/>
    </source>
</evidence>
<evidence type="ECO:0000250" key="3">
    <source>
        <dbReference type="UniProtKB" id="Q6PSU2"/>
    </source>
</evidence>
<evidence type="ECO:0000255" key="4"/>
<evidence type="ECO:0000269" key="5">
    <source>
    </source>
</evidence>
<evidence type="ECO:0000269" key="6">
    <source>
    </source>
</evidence>
<evidence type="ECO:0000303" key="7">
    <source>
    </source>
</evidence>
<evidence type="ECO:0000305" key="8"/>
<evidence type="ECO:0000305" key="9">
    <source>
    </source>
</evidence>
<evidence type="ECO:0000312" key="10">
    <source>
        <dbReference type="EMBL" id="OIW20800.1"/>
    </source>
</evidence>
<dbReference type="EMBL" id="X53523">
    <property type="protein sequence ID" value="CAA37598.1"/>
    <property type="molecule type" value="mRNA"/>
</dbReference>
<dbReference type="EMBL" id="HQ670419">
    <property type="protein sequence ID" value="AEB33722.1"/>
    <property type="molecule type" value="mRNA"/>
</dbReference>
<dbReference type="EMBL" id="MLAU01014968">
    <property type="protein sequence ID" value="OIW20800.1"/>
    <property type="molecule type" value="Genomic_DNA"/>
</dbReference>
<dbReference type="PIR" id="S12404">
    <property type="entry name" value="A33090"/>
</dbReference>
<dbReference type="RefSeq" id="XP_019431756.1">
    <property type="nucleotide sequence ID" value="XM_019576211.1"/>
</dbReference>
<dbReference type="SMR" id="Q99235"/>
<dbReference type="STRING" id="3871.Q99235"/>
<dbReference type="Allergome" id="7698">
    <property type="allergen name" value="Lup an delta_Conglutin"/>
</dbReference>
<dbReference type="EnsemblPlants" id="OIW20800">
    <property type="protein sequence ID" value="OIW20800"/>
    <property type="gene ID" value="TanjilG_23180"/>
</dbReference>
<dbReference type="Gramene" id="OIW20800">
    <property type="protein sequence ID" value="OIW20800"/>
    <property type="gene ID" value="TanjilG_23180"/>
</dbReference>
<dbReference type="KEGG" id="lang:109338861"/>
<dbReference type="OrthoDB" id="1424936at2759"/>
<dbReference type="Proteomes" id="UP000188354">
    <property type="component" value="Unassembled WGS sequence"/>
</dbReference>
<dbReference type="GO" id="GO:0005783">
    <property type="term" value="C:endoplasmic reticulum"/>
    <property type="evidence" value="ECO:0007669"/>
    <property type="project" value="UniProtKB-SubCell"/>
</dbReference>
<dbReference type="GO" id="GO:0045735">
    <property type="term" value="F:nutrient reservoir activity"/>
    <property type="evidence" value="ECO:0007669"/>
    <property type="project" value="InterPro"/>
</dbReference>
<dbReference type="Gene3D" id="1.10.110.10">
    <property type="entry name" value="Plant lipid-transfer and hydrophobic proteins"/>
    <property type="match status" value="1"/>
</dbReference>
<dbReference type="InterPro" id="IPR036312">
    <property type="entry name" value="Bifun_inhib/LTP/seed_sf"/>
</dbReference>
<dbReference type="InterPro" id="IPR016140">
    <property type="entry name" value="Bifunc_inhib/LTP/seed_store"/>
</dbReference>
<dbReference type="InterPro" id="IPR000617">
    <property type="entry name" value="Napin/2SS/CON"/>
</dbReference>
<dbReference type="PANTHER" id="PTHR35496">
    <property type="entry name" value="2S SEED STORAGE PROTEIN 1-RELATED"/>
    <property type="match status" value="1"/>
</dbReference>
<dbReference type="PANTHER" id="PTHR35496:SF20">
    <property type="entry name" value="2S SEED STORAGE PROTEIN 1-RELATED"/>
    <property type="match status" value="1"/>
</dbReference>
<dbReference type="SMART" id="SM00499">
    <property type="entry name" value="AAI"/>
    <property type="match status" value="1"/>
</dbReference>
<dbReference type="SUPFAM" id="SSF47699">
    <property type="entry name" value="Bifunctional inhibitor/lipid-transfer protein/seed storage 2S albumin"/>
    <property type="match status" value="1"/>
</dbReference>
<sequence>MAKLTILIALVAALVLVVHTSAFQSSKQSCKRQLQQVNLRHCENHIAQRIQQQQEEEEDHALKLRGIKHVILRHRSSQEYSEESEELDQCCEQLNELNSQRCQCRALQQIYESQSEQCEGSQQEQQLEQELEKLPRTCGFGPLRRCDVNPDEE</sequence>
<reference key="1">
    <citation type="journal article" date="1990" name="Plant Mol. Biol.">
        <title>Biosynthesis, cDNA and amino acid sequences of a precursor of conglutin delta, a sulphur-rich protein from Lupinus angustifolius.</title>
        <authorList>
            <person name="Gayler K.R."/>
            <person name="Kolivas S."/>
            <person name="Macfarlane A.J."/>
            <person name="Lilley G.G."/>
            <person name="Baldi M."/>
            <person name="Blagrove R.J."/>
            <person name="Johnson E.D."/>
        </authorList>
    </citation>
    <scope>NUCLEOTIDE SEQUENCE [MRNA]</scope>
    <scope>TISSUE SPECIFICITY</scope>
    <scope>SUBCELLULAR LOCATION</scope>
    <source>
        <strain>cv. Unicrop</strain>
        <tissue>Cotyledon</tissue>
    </source>
</reference>
<reference key="2">
    <citation type="journal article" date="2011" name="BMC Plant Biol.">
        <title>Identification and characterisation of seed storage protein transcripts from Lupinus angustifolius.</title>
        <authorList>
            <person name="Foley R.C."/>
            <person name="Gao L.-L."/>
            <person name="Spriggs A."/>
            <person name="Soo L.Y.C."/>
            <person name="Goggin D.E."/>
            <person name="Smith P.M.C."/>
            <person name="Atkins C.A."/>
            <person name="Singh K.B."/>
        </authorList>
    </citation>
    <scope>NUCLEOTIDE SEQUENCE [MRNA]</scope>
    <scope>DEVELOPMENTAL STAGE</scope>
    <scope>ALLERGEN</scope>
    <source>
        <strain>cv. Tanjil</strain>
        <tissue>Seed</tissue>
    </source>
</reference>
<reference key="3">
    <citation type="journal article" date="2017" name="Plant Biotechnol. J.">
        <title>A comprehensive draft genome sequence for lupin (Lupinus angustifolius), an emerging health food: insights into plant-microbe interactions and legume evolution.</title>
        <authorList>
            <person name="Hane J.K."/>
            <person name="Ming Y."/>
            <person name="Kamphuis L.G."/>
            <person name="Nelson M.N."/>
            <person name="Garg G."/>
            <person name="Atkins C.A."/>
            <person name="Bayer P.E."/>
            <person name="Bravo A."/>
            <person name="Bringans S."/>
            <person name="Cannon S."/>
            <person name="Edwards D."/>
            <person name="Foley R."/>
            <person name="Gao L.L."/>
            <person name="Harrison M.J."/>
            <person name="Huang W."/>
            <person name="Hurgobin B."/>
            <person name="Li S."/>
            <person name="Liu C.W."/>
            <person name="McGrath A."/>
            <person name="Morahan G."/>
            <person name="Murray J."/>
            <person name="Weller J."/>
            <person name="Jian J."/>
            <person name="Singh K.B."/>
        </authorList>
    </citation>
    <scope>NUCLEOTIDE SEQUENCE [LARGE SCALE GENOMIC DNA]</scope>
    <source>
        <strain>cv. Tanjil</strain>
        <tissue>Seedling</tissue>
    </source>
</reference>
<proteinExistence type="evidence at protein level"/>
<keyword id="KW-0020">Allergen</keyword>
<keyword id="KW-1015">Disulfide bond</keyword>
<keyword id="KW-0256">Endoplasmic reticulum</keyword>
<keyword id="KW-1185">Reference proteome</keyword>
<keyword id="KW-0732">Signal</keyword>
<name>COND2_LUPAN</name>
<comment type="subunit">
    <text evidence="1">Heterodimer of a small chain and a large chain; disulfide-linked.</text>
</comment>
<comment type="subcellular location">
    <subcellularLocation>
        <location evidence="5">Endoplasmic reticulum</location>
    </subcellularLocation>
</comment>
<comment type="tissue specificity">
    <text evidence="5">Expressed in developing cotyledons (at protein level).</text>
</comment>
<comment type="developmental stage">
    <text evidence="6">Accumulates during seed development.</text>
</comment>
<comment type="allergen">
    <text evidence="9">Causes an allergic reaction in human.</text>
</comment>
<comment type="similarity">
    <text evidence="8">Belongs to the 2S seed storage albumins family.</text>
</comment>
<gene>
    <name evidence="10" type="ORF">TanjilG_23180</name>
</gene>
<organism>
    <name type="scientific">Lupinus angustifolius</name>
    <name type="common">Narrow-leaved blue lupine</name>
    <dbReference type="NCBI Taxonomy" id="3871"/>
    <lineage>
        <taxon>Eukaryota</taxon>
        <taxon>Viridiplantae</taxon>
        <taxon>Streptophyta</taxon>
        <taxon>Embryophyta</taxon>
        <taxon>Tracheophyta</taxon>
        <taxon>Spermatophyta</taxon>
        <taxon>Magnoliopsida</taxon>
        <taxon>eudicotyledons</taxon>
        <taxon>Gunneridae</taxon>
        <taxon>Pentapetalae</taxon>
        <taxon>rosids</taxon>
        <taxon>fabids</taxon>
        <taxon>Fabales</taxon>
        <taxon>Fabaceae</taxon>
        <taxon>Papilionoideae</taxon>
        <taxon>50 kb inversion clade</taxon>
        <taxon>genistoids sensu lato</taxon>
        <taxon>core genistoids</taxon>
        <taxon>Genisteae</taxon>
        <taxon>Lupinus</taxon>
    </lineage>
</organism>
<feature type="signal peptide" evidence="4">
    <location>
        <begin position="1"/>
        <end position="22"/>
    </location>
</feature>
<feature type="chain" id="PRO_5007716036" description="Conglutin delta 2">
    <location>
        <begin position="23"/>
        <end position="153"/>
    </location>
</feature>
<feature type="chain" id="PRO_0000446149" description="Conglutin delta-2 small chain" evidence="1">
    <location>
        <begin position="23"/>
        <end position="59"/>
    </location>
</feature>
<feature type="chain" id="PRO_0000446150" description="Conglutin delta-2 large chain" evidence="1">
    <location>
        <begin position="73"/>
        <end position="153"/>
    </location>
</feature>
<feature type="disulfide bond" evidence="3">
    <location>
        <begin position="30"/>
        <end position="102"/>
    </location>
</feature>
<feature type="disulfide bond" description="Interchain (between small and large chains, with C-102 in large chain)" evidence="2">
    <location>
        <position position="30"/>
    </location>
</feature>
<feature type="disulfide bond" description="Or C-45 with C-104" evidence="3">
    <location>
        <begin position="42"/>
        <end position="90"/>
    </location>
</feature>
<feature type="disulfide bond" description="Interchain (between small and large chains, with C-90 or C-91 in large chain)" evidence="2">
    <location>
        <position position="42"/>
    </location>
</feature>
<feature type="disulfide bond" description="Interchain (between small and large chains, with C-42 in small chain) (or C-91)" evidence="1">
    <location>
        <position position="90"/>
    </location>
</feature>
<feature type="disulfide bond" description="Or C-103 with C-152" evidence="3">
    <location>
        <begin position="91"/>
        <end position="138"/>
    </location>
</feature>
<feature type="disulfide bond" description="Or C-90 with C-65" evidence="1">
    <location>
        <begin position="91"/>
        <end position="138"/>
    </location>
</feature>
<feature type="disulfide bond" description="Interchain (between small and large chains, with C-30 in small chain)" evidence="1">
    <location>
        <position position="102"/>
    </location>
</feature>
<feature type="disulfide bond" evidence="1">
    <location>
        <begin position="104"/>
        <end position="146"/>
    </location>
</feature>